<reference key="1">
    <citation type="journal article" date="2001" name="J. Virol.">
        <title>A human rotavirus with rearranged genes 7 and 11 encodes a modified NSP3 protein and suggests an additional mechanism for gene rearrangement.</title>
        <authorList>
            <person name="Gault E."/>
            <person name="Schnepf N."/>
            <person name="Poncet D."/>
            <person name="Servant A."/>
            <person name="Teran S."/>
            <person name="Garbarg-Chenon A."/>
        </authorList>
    </citation>
    <scope>NUCLEOTIDE SEQUENCE [GENOMIC RNA]</scope>
</reference>
<proteinExistence type="inferred from homology"/>
<accession>Q910F1</accession>
<dbReference type="EMBL" id="AF338244">
    <property type="protein sequence ID" value="AAK74114.1"/>
    <property type="molecule type" value="Genomic_RNA"/>
</dbReference>
<dbReference type="EMBL" id="AF338245">
    <property type="protein sequence ID" value="AAK74115.1"/>
    <property type="molecule type" value="Genomic_RNA"/>
</dbReference>
<dbReference type="SMR" id="Q910F1"/>
<dbReference type="GO" id="GO:0030430">
    <property type="term" value="C:host cell cytoplasm"/>
    <property type="evidence" value="ECO:0007669"/>
    <property type="project" value="UniProtKB-SubCell"/>
</dbReference>
<dbReference type="GO" id="GO:0016887">
    <property type="term" value="F:ATP hydrolysis activity"/>
    <property type="evidence" value="ECO:0007669"/>
    <property type="project" value="UniProtKB-UniRule"/>
</dbReference>
<dbReference type="GO" id="GO:0000287">
    <property type="term" value="F:magnesium ion binding"/>
    <property type="evidence" value="ECO:0007669"/>
    <property type="project" value="UniProtKB-UniRule"/>
</dbReference>
<dbReference type="GO" id="GO:0000166">
    <property type="term" value="F:nucleotide binding"/>
    <property type="evidence" value="ECO:0007669"/>
    <property type="project" value="UniProtKB-UniRule"/>
</dbReference>
<dbReference type="GO" id="GO:0003723">
    <property type="term" value="F:RNA binding"/>
    <property type="evidence" value="ECO:0007669"/>
    <property type="project" value="UniProtKB-UniRule"/>
</dbReference>
<dbReference type="GO" id="GO:0019079">
    <property type="term" value="P:viral genome replication"/>
    <property type="evidence" value="ECO:0007669"/>
    <property type="project" value="UniProtKB-UniRule"/>
</dbReference>
<dbReference type="HAMAP" id="MF_04092">
    <property type="entry name" value="ROTA_NSP5"/>
    <property type="match status" value="1"/>
</dbReference>
<dbReference type="InterPro" id="IPR002512">
    <property type="entry name" value="Rotavirus_A/C_NSP5"/>
</dbReference>
<dbReference type="Pfam" id="PF01525">
    <property type="entry name" value="Rota_NS26"/>
    <property type="match status" value="2"/>
</dbReference>
<dbReference type="PIRSF" id="PIRSF004006">
    <property type="entry name" value="Rota_NS26"/>
    <property type="match status" value="1"/>
</dbReference>
<sequence>MSLSIDVTSLPSISSNIFKNESSSTTSTLSGKSIGRNEQYVSSDIEAFNKYMLSKSPEDIGPSDSASNDPLTSFSIRSNAVKTNADAGVSMDSSTQSRPSSNVGCDQMDFSLTKGINVSASLDSCVSISTNHKKEKSKKDKSRKHYPRIEADSDSEDYVLDDSDSDDGKCKNCKYKKKYFALRMRMKQVAMQLIEDL</sequence>
<keyword id="KW-0325">Glycoprotein</keyword>
<keyword id="KW-1035">Host cytoplasm</keyword>
<keyword id="KW-0460">Magnesium</keyword>
<keyword id="KW-0479">Metal-binding</keyword>
<keyword id="KW-0547">Nucleotide-binding</keyword>
<keyword id="KW-0597">Phosphoprotein</keyword>
<keyword id="KW-0694">RNA-binding</keyword>
<protein>
    <recommendedName>
        <fullName evidence="1">Non-structural protein 5</fullName>
        <shortName evidence="1">NSP5</shortName>
    </recommendedName>
    <alternativeName>
        <fullName evidence="1">NS26</fullName>
    </alternativeName>
</protein>
<organismHost>
    <name type="scientific">Homo sapiens</name>
    <name type="common">Human</name>
    <dbReference type="NCBI Taxonomy" id="9606"/>
</organismHost>
<feature type="chain" id="PRO_0000369506" description="Non-structural protein 5">
    <location>
        <begin position="1"/>
        <end position="197"/>
    </location>
</feature>
<feature type="region of interest" description="Disordered" evidence="2">
    <location>
        <begin position="16"/>
        <end position="36"/>
    </location>
</feature>
<feature type="region of interest" description="Disordered" evidence="2">
    <location>
        <begin position="130"/>
        <end position="167"/>
    </location>
</feature>
<feature type="compositionally biased region" description="Basic residues" evidence="2">
    <location>
        <begin position="131"/>
        <end position="146"/>
    </location>
</feature>
<feature type="compositionally biased region" description="Acidic residues" evidence="2">
    <location>
        <begin position="152"/>
        <end position="165"/>
    </location>
</feature>
<feature type="binding site" evidence="1">
    <location>
        <position position="92"/>
    </location>
    <ligand>
        <name>Mg(2+)</name>
        <dbReference type="ChEBI" id="CHEBI:18420"/>
    </ligand>
</feature>
<feature type="modified residue" description="Phosphoserine; by host CK1" evidence="1">
    <location>
        <position position="67"/>
    </location>
</feature>
<feature type="modified residue" description="Phosphoserine; by host" evidence="1">
    <location>
        <position position="153"/>
    </location>
</feature>
<feature type="modified residue" description="Phosphoserine; by host" evidence="1">
    <location>
        <position position="155"/>
    </location>
</feature>
<feature type="modified residue" description="Phosphoserine; by host" evidence="1">
    <location>
        <position position="163"/>
    </location>
</feature>
<feature type="modified residue" description="Phosphoserine; by host" evidence="1">
    <location>
        <position position="165"/>
    </location>
</feature>
<organism>
    <name type="scientific">Rotavirus A (strain RVA/Human/United States/M/1976/G3P[X])</name>
    <name type="common">RV-A</name>
    <dbReference type="NCBI Taxonomy" id="578834"/>
    <lineage>
        <taxon>Viruses</taxon>
        <taxon>Riboviria</taxon>
        <taxon>Orthornavirae</taxon>
        <taxon>Duplornaviricota</taxon>
        <taxon>Resentoviricetes</taxon>
        <taxon>Reovirales</taxon>
        <taxon>Sedoreoviridae</taxon>
        <taxon>Rotavirus</taxon>
        <taxon>Rotavirus A</taxon>
    </lineage>
</organism>
<name>NSP5_ROTAM</name>
<evidence type="ECO:0000255" key="1">
    <source>
        <dbReference type="HAMAP-Rule" id="MF_04092"/>
    </source>
</evidence>
<evidence type="ECO:0000256" key="2">
    <source>
        <dbReference type="SAM" id="MobiDB-lite"/>
    </source>
</evidence>
<comment type="function">
    <text evidence="1">Plays an essential role in the viral genome replication. Participates, together with NSP2, in the formation of viral factories (viroplasms), which are large inclusions in the host cytoplasm where replication intermediates are assembled and viral RNA replication takes place. Orchestrates the recruitment of viroplasmic proteins such as capsid proteins to these factories. Participates in the selective exclusion of host proteins from stress granules (SG) and P bodies (PB). Also participates in the sequestration of these remodeled organelles in viral factories.</text>
</comment>
<comment type="cofactor">
    <cofactor evidence="1">
        <name>Mg(2+)</name>
        <dbReference type="ChEBI" id="CHEBI:18420"/>
    </cofactor>
</comment>
<comment type="subunit">
    <text evidence="1">Homodimer. Interacts with VP1. Interacts with VP2. Interacts with NSP2; this interaction leads to up-regulation of NSP5 hyperphosphorylation and formation of virus factories. Interacts with NSP6. Participates in the selective exclusion of host proteins from stress granules (SG) and P bodies (PB). Also participates in the sequestration of these remodeled organelles in viral factories.</text>
</comment>
<comment type="subcellular location">
    <subcellularLocation>
        <location evidence="1">Host cytoplasm</location>
    </subcellularLocation>
    <text evidence="1">Found in spherical cytoplasmic structures, called virus factories, that appear early after infection and are the site of viral replication and packaging.</text>
</comment>
<comment type="PTM">
    <text evidence="1">O-glycosylated.</text>
</comment>
<comment type="PTM">
    <text evidence="1">Hyperphosphorylated on serine residues, when in dimeric form. Phosphorylation by host CK1 is required for the hyperphosphorylation of NSP5 dimer.</text>
</comment>
<comment type="similarity">
    <text evidence="1">Belongs to the rotavirus NSP5 family.</text>
</comment>